<feature type="chain" id="PRO_1000184020" description="Large ribosomal subunit protein bL17">
    <location>
        <begin position="1"/>
        <end position="129"/>
    </location>
</feature>
<gene>
    <name evidence="1" type="primary">rplQ</name>
    <name type="ordered locus">Dtpsy_0399</name>
</gene>
<proteinExistence type="inferred from homology"/>
<reference key="1">
    <citation type="submission" date="2009-01" db="EMBL/GenBank/DDBJ databases">
        <title>Complete sequence of Diaphorobacter sp. TPSY.</title>
        <authorList>
            <consortium name="US DOE Joint Genome Institute"/>
            <person name="Lucas S."/>
            <person name="Copeland A."/>
            <person name="Lapidus A."/>
            <person name="Glavina del Rio T."/>
            <person name="Tice H."/>
            <person name="Bruce D."/>
            <person name="Goodwin L."/>
            <person name="Pitluck S."/>
            <person name="Chertkov O."/>
            <person name="Brettin T."/>
            <person name="Detter J.C."/>
            <person name="Han C."/>
            <person name="Larimer F."/>
            <person name="Land M."/>
            <person name="Hauser L."/>
            <person name="Kyrpides N."/>
            <person name="Mikhailova N."/>
            <person name="Coates J.D."/>
        </authorList>
    </citation>
    <scope>NUCLEOTIDE SEQUENCE [LARGE SCALE GENOMIC DNA]</scope>
    <source>
        <strain>TPSY</strain>
    </source>
</reference>
<accession>B9MBW3</accession>
<name>RL17_ACIET</name>
<comment type="subunit">
    <text evidence="1">Part of the 50S ribosomal subunit. Contacts protein L32.</text>
</comment>
<comment type="similarity">
    <text evidence="1">Belongs to the bacterial ribosomal protein bL17 family.</text>
</comment>
<dbReference type="EMBL" id="CP001392">
    <property type="protein sequence ID" value="ACM31883.1"/>
    <property type="molecule type" value="Genomic_DNA"/>
</dbReference>
<dbReference type="RefSeq" id="WP_011803868.1">
    <property type="nucleotide sequence ID" value="NC_011992.1"/>
</dbReference>
<dbReference type="SMR" id="B9MBW3"/>
<dbReference type="GeneID" id="84683087"/>
<dbReference type="KEGG" id="dia:Dtpsy_0399"/>
<dbReference type="eggNOG" id="COG0203">
    <property type="taxonomic scope" value="Bacteria"/>
</dbReference>
<dbReference type="HOGENOM" id="CLU_074407_2_0_4"/>
<dbReference type="Proteomes" id="UP000000450">
    <property type="component" value="Chromosome"/>
</dbReference>
<dbReference type="GO" id="GO:0022625">
    <property type="term" value="C:cytosolic large ribosomal subunit"/>
    <property type="evidence" value="ECO:0007669"/>
    <property type="project" value="TreeGrafter"/>
</dbReference>
<dbReference type="GO" id="GO:0003735">
    <property type="term" value="F:structural constituent of ribosome"/>
    <property type="evidence" value="ECO:0007669"/>
    <property type="project" value="InterPro"/>
</dbReference>
<dbReference type="GO" id="GO:0006412">
    <property type="term" value="P:translation"/>
    <property type="evidence" value="ECO:0007669"/>
    <property type="project" value="UniProtKB-UniRule"/>
</dbReference>
<dbReference type="FunFam" id="3.90.1030.10:FF:000001">
    <property type="entry name" value="50S ribosomal protein L17"/>
    <property type="match status" value="1"/>
</dbReference>
<dbReference type="Gene3D" id="3.90.1030.10">
    <property type="entry name" value="Ribosomal protein L17"/>
    <property type="match status" value="1"/>
</dbReference>
<dbReference type="HAMAP" id="MF_01368">
    <property type="entry name" value="Ribosomal_bL17"/>
    <property type="match status" value="1"/>
</dbReference>
<dbReference type="InterPro" id="IPR000456">
    <property type="entry name" value="Ribosomal_bL17"/>
</dbReference>
<dbReference type="InterPro" id="IPR047859">
    <property type="entry name" value="Ribosomal_bL17_CS"/>
</dbReference>
<dbReference type="InterPro" id="IPR036373">
    <property type="entry name" value="Ribosomal_bL17_sf"/>
</dbReference>
<dbReference type="NCBIfam" id="TIGR00059">
    <property type="entry name" value="L17"/>
    <property type="match status" value="1"/>
</dbReference>
<dbReference type="PANTHER" id="PTHR14413:SF16">
    <property type="entry name" value="LARGE RIBOSOMAL SUBUNIT PROTEIN BL17M"/>
    <property type="match status" value="1"/>
</dbReference>
<dbReference type="PANTHER" id="PTHR14413">
    <property type="entry name" value="RIBOSOMAL PROTEIN L17"/>
    <property type="match status" value="1"/>
</dbReference>
<dbReference type="Pfam" id="PF01196">
    <property type="entry name" value="Ribosomal_L17"/>
    <property type="match status" value="1"/>
</dbReference>
<dbReference type="SUPFAM" id="SSF64263">
    <property type="entry name" value="Prokaryotic ribosomal protein L17"/>
    <property type="match status" value="1"/>
</dbReference>
<dbReference type="PROSITE" id="PS01167">
    <property type="entry name" value="RIBOSOMAL_L17"/>
    <property type="match status" value="1"/>
</dbReference>
<sequence length="129" mass="14760">MRHGHGLRKLNRTSSHRLAMLQNMMNSLIEHEAIKTTLPKAKELRRVIEPMITLAKEDSVANRRLAFNRLRDRDSVTKLFNDLGPRFKTRPGGYTRILKMGFRVGDNAPMAYVELVDRAETPEVSSTEA</sequence>
<organism>
    <name type="scientific">Acidovorax ebreus (strain TPSY)</name>
    <name type="common">Diaphorobacter sp. (strain TPSY)</name>
    <dbReference type="NCBI Taxonomy" id="535289"/>
    <lineage>
        <taxon>Bacteria</taxon>
        <taxon>Pseudomonadati</taxon>
        <taxon>Pseudomonadota</taxon>
        <taxon>Betaproteobacteria</taxon>
        <taxon>Burkholderiales</taxon>
        <taxon>Comamonadaceae</taxon>
        <taxon>Diaphorobacter</taxon>
    </lineage>
</organism>
<evidence type="ECO:0000255" key="1">
    <source>
        <dbReference type="HAMAP-Rule" id="MF_01368"/>
    </source>
</evidence>
<evidence type="ECO:0000305" key="2"/>
<protein>
    <recommendedName>
        <fullName evidence="1">Large ribosomal subunit protein bL17</fullName>
    </recommendedName>
    <alternativeName>
        <fullName evidence="2">50S ribosomal protein L17</fullName>
    </alternativeName>
</protein>
<keyword id="KW-1185">Reference proteome</keyword>
<keyword id="KW-0687">Ribonucleoprotein</keyword>
<keyword id="KW-0689">Ribosomal protein</keyword>